<feature type="chain" id="PRO_0000398670" description="Transcription termination factor Rho">
    <location>
        <begin position="1"/>
        <end position="737"/>
    </location>
</feature>
<feature type="domain" description="Rho RNA-BD" evidence="2">
    <location>
        <begin position="367"/>
        <end position="439"/>
    </location>
</feature>
<feature type="region of interest" description="Disordered" evidence="3">
    <location>
        <begin position="1"/>
        <end position="396"/>
    </location>
</feature>
<feature type="compositionally biased region" description="Low complexity" evidence="3">
    <location>
        <begin position="16"/>
        <end position="28"/>
    </location>
</feature>
<feature type="compositionally biased region" description="Low complexity" evidence="3">
    <location>
        <begin position="62"/>
        <end position="86"/>
    </location>
</feature>
<feature type="compositionally biased region" description="Low complexity" evidence="3">
    <location>
        <begin position="101"/>
        <end position="111"/>
    </location>
</feature>
<feature type="compositionally biased region" description="Basic and acidic residues" evidence="3">
    <location>
        <begin position="145"/>
        <end position="175"/>
    </location>
</feature>
<feature type="compositionally biased region" description="Basic and acidic residues" evidence="3">
    <location>
        <begin position="196"/>
        <end position="256"/>
    </location>
</feature>
<feature type="compositionally biased region" description="Basic and acidic residues" evidence="3">
    <location>
        <begin position="266"/>
        <end position="279"/>
    </location>
</feature>
<feature type="compositionally biased region" description="Basic and acidic residues" evidence="3">
    <location>
        <begin position="286"/>
        <end position="324"/>
    </location>
</feature>
<feature type="compositionally biased region" description="Basic residues" evidence="3">
    <location>
        <begin position="328"/>
        <end position="339"/>
    </location>
</feature>
<feature type="compositionally biased region" description="Polar residues" evidence="3">
    <location>
        <begin position="347"/>
        <end position="360"/>
    </location>
</feature>
<feature type="compositionally biased region" description="Basic and acidic residues" evidence="3">
    <location>
        <begin position="376"/>
        <end position="387"/>
    </location>
</feature>
<feature type="binding site" evidence="1">
    <location>
        <begin position="487"/>
        <end position="492"/>
    </location>
    <ligand>
        <name>ATP</name>
        <dbReference type="ChEBI" id="CHEBI:30616"/>
    </ligand>
</feature>
<feature type="binding site" evidence="1">
    <location>
        <begin position="499"/>
        <end position="504"/>
    </location>
    <ligand>
        <name>ATP</name>
        <dbReference type="ChEBI" id="CHEBI:30616"/>
    </ligand>
</feature>
<feature type="binding site" evidence="1">
    <location>
        <position position="530"/>
    </location>
    <ligand>
        <name>ATP</name>
        <dbReference type="ChEBI" id="CHEBI:30616"/>
    </ligand>
</feature>
<proteinExistence type="inferred from homology"/>
<name>RHO_GEMAT</name>
<keyword id="KW-0067">ATP-binding</keyword>
<keyword id="KW-0347">Helicase</keyword>
<keyword id="KW-0378">Hydrolase</keyword>
<keyword id="KW-0547">Nucleotide-binding</keyword>
<keyword id="KW-1185">Reference proteome</keyword>
<keyword id="KW-0694">RNA-binding</keyword>
<keyword id="KW-0804">Transcription</keyword>
<keyword id="KW-0805">Transcription regulation</keyword>
<keyword id="KW-0806">Transcription termination</keyword>
<reference key="1">
    <citation type="submission" date="2006-03" db="EMBL/GenBank/DDBJ databases">
        <title>Complete genome sequence of Gemmatimonas aurantiaca T-27 that represents a novel phylum Gemmatimonadetes.</title>
        <authorList>
            <person name="Takasaki K."/>
            <person name="Ichikawa N."/>
            <person name="Miura H."/>
            <person name="Matsushita S."/>
            <person name="Watanabe Y."/>
            <person name="Oguchi A."/>
            <person name="Ankai A."/>
            <person name="Yashiro I."/>
            <person name="Takahashi M."/>
            <person name="Terui Y."/>
            <person name="Fukui S."/>
            <person name="Yokoyama H."/>
            <person name="Tanikawa S."/>
            <person name="Hanada S."/>
            <person name="Kamagata Y."/>
            <person name="Fujita N."/>
        </authorList>
    </citation>
    <scope>NUCLEOTIDE SEQUENCE [LARGE SCALE GENOMIC DNA]</scope>
    <source>
        <strain>DSM 14586 / JCM 11422 / NBRC 100505 / T-27</strain>
    </source>
</reference>
<dbReference type="EC" id="3.6.4.-" evidence="1"/>
<dbReference type="EMBL" id="AP009153">
    <property type="protein sequence ID" value="BAH37488.1"/>
    <property type="molecule type" value="Genomic_DNA"/>
</dbReference>
<dbReference type="SMR" id="C1A5H8"/>
<dbReference type="STRING" id="379066.GAU_0446"/>
<dbReference type="KEGG" id="gau:GAU_0446"/>
<dbReference type="eggNOG" id="COG1158">
    <property type="taxonomic scope" value="Bacteria"/>
</dbReference>
<dbReference type="HOGENOM" id="CLU_016377_3_0_0"/>
<dbReference type="Proteomes" id="UP000002209">
    <property type="component" value="Chromosome"/>
</dbReference>
<dbReference type="GO" id="GO:0005524">
    <property type="term" value="F:ATP binding"/>
    <property type="evidence" value="ECO:0007669"/>
    <property type="project" value="UniProtKB-UniRule"/>
</dbReference>
<dbReference type="GO" id="GO:0016887">
    <property type="term" value="F:ATP hydrolysis activity"/>
    <property type="evidence" value="ECO:0007669"/>
    <property type="project" value="InterPro"/>
</dbReference>
<dbReference type="GO" id="GO:0008186">
    <property type="term" value="F:ATP-dependent activity, acting on RNA"/>
    <property type="evidence" value="ECO:0007669"/>
    <property type="project" value="InterPro"/>
</dbReference>
<dbReference type="GO" id="GO:0004386">
    <property type="term" value="F:helicase activity"/>
    <property type="evidence" value="ECO:0007669"/>
    <property type="project" value="UniProtKB-UniRule"/>
</dbReference>
<dbReference type="GO" id="GO:0003723">
    <property type="term" value="F:RNA binding"/>
    <property type="evidence" value="ECO:0007669"/>
    <property type="project" value="UniProtKB-UniRule"/>
</dbReference>
<dbReference type="GO" id="GO:0006353">
    <property type="term" value="P:DNA-templated transcription termination"/>
    <property type="evidence" value="ECO:0007669"/>
    <property type="project" value="UniProtKB-UniRule"/>
</dbReference>
<dbReference type="CDD" id="cd01128">
    <property type="entry name" value="rho_factor_C"/>
    <property type="match status" value="1"/>
</dbReference>
<dbReference type="Gene3D" id="2.40.50.140">
    <property type="entry name" value="Nucleic acid-binding proteins"/>
    <property type="match status" value="1"/>
</dbReference>
<dbReference type="Gene3D" id="3.40.50.300">
    <property type="entry name" value="P-loop containing nucleotide triphosphate hydrolases"/>
    <property type="match status" value="1"/>
</dbReference>
<dbReference type="HAMAP" id="MF_01884">
    <property type="entry name" value="Rho"/>
    <property type="match status" value="1"/>
</dbReference>
<dbReference type="InterPro" id="IPR003593">
    <property type="entry name" value="AAA+_ATPase"/>
</dbReference>
<dbReference type="InterPro" id="IPR000194">
    <property type="entry name" value="ATPase_F1/V1/A1_a/bsu_nucl-bd"/>
</dbReference>
<dbReference type="InterPro" id="IPR012340">
    <property type="entry name" value="NA-bd_OB-fold"/>
</dbReference>
<dbReference type="InterPro" id="IPR027417">
    <property type="entry name" value="P-loop_NTPase"/>
</dbReference>
<dbReference type="InterPro" id="IPR041703">
    <property type="entry name" value="Rho_factor_ATP-bd"/>
</dbReference>
<dbReference type="InterPro" id="IPR011113">
    <property type="entry name" value="Rho_RNA-bd"/>
</dbReference>
<dbReference type="InterPro" id="IPR004665">
    <property type="entry name" value="Term_rho"/>
</dbReference>
<dbReference type="NCBIfam" id="NF006886">
    <property type="entry name" value="PRK09376.1"/>
    <property type="match status" value="1"/>
</dbReference>
<dbReference type="PANTHER" id="PTHR46425">
    <property type="entry name" value="TRANSCRIPTION TERMINATION FACTOR RHO"/>
    <property type="match status" value="1"/>
</dbReference>
<dbReference type="PANTHER" id="PTHR46425:SF1">
    <property type="entry name" value="TRANSCRIPTION TERMINATION FACTOR RHO"/>
    <property type="match status" value="1"/>
</dbReference>
<dbReference type="Pfam" id="PF00006">
    <property type="entry name" value="ATP-synt_ab"/>
    <property type="match status" value="1"/>
</dbReference>
<dbReference type="Pfam" id="PF07497">
    <property type="entry name" value="Rho_RNA_bind"/>
    <property type="match status" value="1"/>
</dbReference>
<dbReference type="SMART" id="SM00382">
    <property type="entry name" value="AAA"/>
    <property type="match status" value="1"/>
</dbReference>
<dbReference type="SUPFAM" id="SSF52540">
    <property type="entry name" value="P-loop containing nucleoside triphosphate hydrolases"/>
    <property type="match status" value="1"/>
</dbReference>
<dbReference type="PROSITE" id="PS51856">
    <property type="entry name" value="RHO_RNA_BD"/>
    <property type="match status" value="1"/>
</dbReference>
<protein>
    <recommendedName>
        <fullName evidence="1">Transcription termination factor Rho</fullName>
        <ecNumber evidence="1">3.6.4.-</ecNumber>
    </recommendedName>
    <alternativeName>
        <fullName evidence="1">ATP-dependent helicase Rho</fullName>
    </alternativeName>
</protein>
<comment type="function">
    <text evidence="1">Facilitates transcription termination by a mechanism that involves Rho binding to the nascent RNA, activation of Rho's RNA-dependent ATPase activity, and release of the mRNA from the DNA template.</text>
</comment>
<comment type="subunit">
    <text evidence="1">Homohexamer. The homohexamer assembles into an open ring structure.</text>
</comment>
<comment type="similarity">
    <text evidence="1">Belongs to the Rho family.</text>
</comment>
<accession>C1A5H8</accession>
<evidence type="ECO:0000255" key="1">
    <source>
        <dbReference type="HAMAP-Rule" id="MF_01884"/>
    </source>
</evidence>
<evidence type="ECO:0000255" key="2">
    <source>
        <dbReference type="PROSITE-ProRule" id="PRU01203"/>
    </source>
</evidence>
<evidence type="ECO:0000256" key="3">
    <source>
        <dbReference type="SAM" id="MobiDB-lite"/>
    </source>
</evidence>
<organism>
    <name type="scientific">Gemmatimonas aurantiaca (strain DSM 14586 / JCM 11422 / NBRC 100505 / T-27)</name>
    <dbReference type="NCBI Taxonomy" id="379066"/>
    <lineage>
        <taxon>Bacteria</taxon>
        <taxon>Pseudomonadati</taxon>
        <taxon>Gemmatimonadota</taxon>
        <taxon>Gemmatimonadia</taxon>
        <taxon>Gemmatimonadales</taxon>
        <taxon>Gemmatimonadaceae</taxon>
        <taxon>Gemmatimonas</taxon>
    </lineage>
</organism>
<sequence length="737" mass="81379">MSGPCSAHRVPPIGPRPTIRSPRITRSSRMTEPKRPSRRGTTRTRPAPDSVGDDNPYLDAPASRASSESRSESGSGLSAEGSGSDAPRPRRPRQPRRPAADAESAPTAADTNDSAPAPTARRGVRRTTRSAAAGTDVSSSTSELPRAESPRSEPRTESRPEPRAENGSETRHESRGGSSEGRPSFRDPSPSGYEASMERPLADRPDAPNRYDRAFDRTDGPERQDTRPERPFQQERPFQQDRQDRHERQDRPDRRDRNGRRRGRGGRPDNRGPGGDRHQSTGPAADRSHDRGPDRNNERAFDRPERPDRQGESSDRFDSQDRGGNRQRNGRRGRNRFRRGAGGNESAPISGSHAPSQGSPSAPIGVEGTMAGWFDPSRDGGFLRRPENSYLPDPTDPFMPPALVRLHQLRRGDRLEVTYGRDHRGRYLVIEVQTLNDGSPVVLEKRPDFNTLVASYPDRKLTLETGRPAKTGPELTRRAIDLIAPIGYGQRALIVAPARAGKTTLLQAIVEGVSINHPEAVLLVLLVDERPEEVSEMITWGYGEVVASSFDMPPKRHVEVAEMTLERARRLVEQGKDVVIVLDSITRLARAHNTVDRGTGRTMSGGLDATAMQKPKAFFGSARMIAPQHGGGSLTIIATALVETGSRMDDVIFEEFKGTGNCEIKLDRSLADRRIFPAFDIATSGTRREEKLYRPDQLEKVHLLRRGLHQLPPQAGMEWLIKRIAATTNNDSLLDGL</sequence>
<gene>
    <name evidence="1" type="primary">rho</name>
    <name type="ordered locus">GAU_0446</name>
</gene>